<proteinExistence type="evidence at transcript level"/>
<feature type="initiator methionine" description="Removed" evidence="2">
    <location>
        <position position="1"/>
    </location>
</feature>
<feature type="chain" id="PRO_0000319995" description="Vesicle-associated membrane protein 7" evidence="2">
    <location>
        <begin position="2"/>
        <end position="220"/>
    </location>
</feature>
<feature type="topological domain" description="Cytoplasmic" evidence="2 5">
    <location>
        <begin position="2"/>
        <end position="188"/>
    </location>
</feature>
<feature type="transmembrane region" description="Helical; Anchor for type IV membrane protein" evidence="5">
    <location>
        <begin position="189"/>
        <end position="209"/>
    </location>
</feature>
<feature type="topological domain" description="Vesicular" evidence="2 5">
    <location>
        <begin position="210"/>
        <end position="220"/>
    </location>
</feature>
<feature type="domain" description="Longin" evidence="6">
    <location>
        <begin position="7"/>
        <end position="110"/>
    </location>
</feature>
<feature type="domain" description="v-SNARE coiled-coil homology" evidence="7">
    <location>
        <begin position="125"/>
        <end position="185"/>
    </location>
</feature>
<sequence length="220" mass="24682">MAILFAVVARGTTILAKHAWCGGNFLEVTEQILAKIPSENNKLTYSHGNYLFHYICQDRIIYLCITDDDFERSRAFNFLNEIKKRFQTTYGSRAQTALPYAMNSEFSSVLAAQLKYHSESKGTDQVAETQAQVDELKGIMVRNIDLVAQRGEKLELLIDKTENLVDSSVTFKTTSRNLARAMCMKNLKLTIIIIIVSIVIIYIIVSAACGGLAWPSCVQK</sequence>
<protein>
    <recommendedName>
        <fullName>Vesicle-associated membrane protein 7</fullName>
    </recommendedName>
    <alternativeName>
        <fullName>Synaptobrevin-like protein 1</fullName>
    </alternativeName>
</protein>
<organism>
    <name type="scientific">Gallus gallus</name>
    <name type="common">Chicken</name>
    <dbReference type="NCBI Taxonomy" id="9031"/>
    <lineage>
        <taxon>Eukaryota</taxon>
        <taxon>Metazoa</taxon>
        <taxon>Chordata</taxon>
        <taxon>Craniata</taxon>
        <taxon>Vertebrata</taxon>
        <taxon>Euteleostomi</taxon>
        <taxon>Archelosauria</taxon>
        <taxon>Archosauria</taxon>
        <taxon>Dinosauria</taxon>
        <taxon>Saurischia</taxon>
        <taxon>Theropoda</taxon>
        <taxon>Coelurosauria</taxon>
        <taxon>Aves</taxon>
        <taxon>Neognathae</taxon>
        <taxon>Galloanserae</taxon>
        <taxon>Galliformes</taxon>
        <taxon>Phasianidae</taxon>
        <taxon>Phasianinae</taxon>
        <taxon>Gallus</taxon>
    </lineage>
</organism>
<keyword id="KW-0175">Coiled coil</keyword>
<keyword id="KW-0968">Cytoplasmic vesicle</keyword>
<keyword id="KW-0256">Endoplasmic reticulum</keyword>
<keyword id="KW-0967">Endosome</keyword>
<keyword id="KW-0333">Golgi apparatus</keyword>
<keyword id="KW-0458">Lysosome</keyword>
<keyword id="KW-0472">Membrane</keyword>
<keyword id="KW-0653">Protein transport</keyword>
<keyword id="KW-1185">Reference proteome</keyword>
<keyword id="KW-0735">Signal-anchor</keyword>
<keyword id="KW-0770">Synapse</keyword>
<keyword id="KW-0771">Synaptosome</keyword>
<keyword id="KW-0812">Transmembrane</keyword>
<keyword id="KW-1133">Transmembrane helix</keyword>
<keyword id="KW-0813">Transport</keyword>
<evidence type="ECO:0000250" key="1"/>
<evidence type="ECO:0000250" key="2">
    <source>
        <dbReference type="UniProtKB" id="P51809"/>
    </source>
</evidence>
<evidence type="ECO:0000250" key="3">
    <source>
        <dbReference type="UniProtKB" id="P70280"/>
    </source>
</evidence>
<evidence type="ECO:0000250" key="4">
    <source>
        <dbReference type="UniProtKB" id="Q9JHW5"/>
    </source>
</evidence>
<evidence type="ECO:0000255" key="5"/>
<evidence type="ECO:0000255" key="6">
    <source>
        <dbReference type="PROSITE-ProRule" id="PRU00231"/>
    </source>
</evidence>
<evidence type="ECO:0000255" key="7">
    <source>
        <dbReference type="PROSITE-ProRule" id="PRU00290"/>
    </source>
</evidence>
<evidence type="ECO:0000305" key="8"/>
<evidence type="ECO:0000312" key="9">
    <source>
        <dbReference type="EMBL" id="CAG31519.1"/>
    </source>
</evidence>
<dbReference type="EMBL" id="AJ719860">
    <property type="protein sequence ID" value="CAG31519.1"/>
    <property type="molecule type" value="mRNA"/>
</dbReference>
<dbReference type="RefSeq" id="NP_001026292.1">
    <property type="nucleotide sequence ID" value="NM_001031121.2"/>
</dbReference>
<dbReference type="RefSeq" id="XP_015133771.1">
    <property type="nucleotide sequence ID" value="XM_015278285.4"/>
</dbReference>
<dbReference type="RefSeq" id="XP_015133772.1">
    <property type="nucleotide sequence ID" value="XM_015278286.4"/>
</dbReference>
<dbReference type="RefSeq" id="XP_015133773.1">
    <property type="nucleotide sequence ID" value="XM_015278287.4"/>
</dbReference>
<dbReference type="RefSeq" id="XP_015133774.1">
    <property type="nucleotide sequence ID" value="XM_015278288.4"/>
</dbReference>
<dbReference type="RefSeq" id="XP_015133775.1">
    <property type="nucleotide sequence ID" value="XM_015278289.4"/>
</dbReference>
<dbReference type="RefSeq" id="XP_040554775.1">
    <property type="nucleotide sequence ID" value="XM_040698841.2"/>
</dbReference>
<dbReference type="RefSeq" id="XP_046771787.1">
    <property type="nucleotide sequence ID" value="XM_046915831.1"/>
</dbReference>
<dbReference type="RefSeq" id="XP_046771788.1">
    <property type="nucleotide sequence ID" value="XM_046915832.1"/>
</dbReference>
<dbReference type="RefSeq" id="XP_046771789.1">
    <property type="nucleotide sequence ID" value="XM_046915833.1"/>
</dbReference>
<dbReference type="RefSeq" id="XP_046771790.1">
    <property type="nucleotide sequence ID" value="XM_046915834.1"/>
</dbReference>
<dbReference type="RefSeq" id="XP_046771791.1">
    <property type="nucleotide sequence ID" value="XM_046915835.1"/>
</dbReference>
<dbReference type="RefSeq" id="XP_046771792.1">
    <property type="nucleotide sequence ID" value="XM_046915836.1"/>
</dbReference>
<dbReference type="BMRB" id="Q5ZL74"/>
<dbReference type="SMR" id="Q5ZL74"/>
<dbReference type="FunCoup" id="Q5ZL74">
    <property type="interactions" value="1957"/>
</dbReference>
<dbReference type="STRING" id="9031.ENSGALP00000031702"/>
<dbReference type="PaxDb" id="9031-ENSGALP00000031702"/>
<dbReference type="GeneID" id="422297"/>
<dbReference type="KEGG" id="gga:422297"/>
<dbReference type="CTD" id="6845"/>
<dbReference type="VEuPathDB" id="HostDB:geneid_422297"/>
<dbReference type="eggNOG" id="KOG0859">
    <property type="taxonomic scope" value="Eukaryota"/>
</dbReference>
<dbReference type="HOGENOM" id="CLU_064620_1_1_1"/>
<dbReference type="InParanoid" id="Q5ZL74"/>
<dbReference type="OMA" id="NTKLMIM"/>
<dbReference type="OrthoDB" id="248747at2759"/>
<dbReference type="PhylomeDB" id="Q5ZL74"/>
<dbReference type="Reactome" id="R-GGA-432720">
    <property type="pathway name" value="Lysosome Vesicle Biogenesis"/>
</dbReference>
<dbReference type="Reactome" id="R-GGA-432722">
    <property type="pathway name" value="Golgi Associated Vesicle Biogenesis"/>
</dbReference>
<dbReference type="Reactome" id="R-GGA-8856825">
    <property type="pathway name" value="Cargo recognition for clathrin-mediated endocytosis"/>
</dbReference>
<dbReference type="Reactome" id="R-GGA-8856828">
    <property type="pathway name" value="Clathrin-mediated endocytosis"/>
</dbReference>
<dbReference type="Reactome" id="R-GGA-9020591">
    <property type="pathway name" value="Interleukin-12 signaling"/>
</dbReference>
<dbReference type="PRO" id="PR:Q5ZL74"/>
<dbReference type="Proteomes" id="UP000000539">
    <property type="component" value="Chromosome 4"/>
</dbReference>
<dbReference type="Bgee" id="ENSGALG00000007476">
    <property type="expression patterns" value="Expressed in spermatid and 14 other cell types or tissues"/>
</dbReference>
<dbReference type="GO" id="GO:0005789">
    <property type="term" value="C:endoplasmic reticulum membrane"/>
    <property type="evidence" value="ECO:0000250"/>
    <property type="project" value="UniProtKB"/>
</dbReference>
<dbReference type="GO" id="GO:0005794">
    <property type="term" value="C:Golgi apparatus"/>
    <property type="evidence" value="ECO:0007669"/>
    <property type="project" value="UniProtKB-SubCell"/>
</dbReference>
<dbReference type="GO" id="GO:0031902">
    <property type="term" value="C:late endosome membrane"/>
    <property type="evidence" value="ECO:0000250"/>
    <property type="project" value="UniProtKB"/>
</dbReference>
<dbReference type="GO" id="GO:0005765">
    <property type="term" value="C:lysosomal membrane"/>
    <property type="evidence" value="ECO:0000250"/>
    <property type="project" value="UniProtKB"/>
</dbReference>
<dbReference type="GO" id="GO:0043005">
    <property type="term" value="C:neuron projection"/>
    <property type="evidence" value="ECO:0000250"/>
    <property type="project" value="UniProtKB"/>
</dbReference>
<dbReference type="GO" id="GO:0045335">
    <property type="term" value="C:phagocytic vesicle"/>
    <property type="evidence" value="ECO:0000250"/>
    <property type="project" value="UniProtKB"/>
</dbReference>
<dbReference type="GO" id="GO:0030670">
    <property type="term" value="C:phagocytic vesicle membrane"/>
    <property type="evidence" value="ECO:0007669"/>
    <property type="project" value="UniProtKB-SubCell"/>
</dbReference>
<dbReference type="GO" id="GO:0031201">
    <property type="term" value="C:SNARE complex"/>
    <property type="evidence" value="ECO:0000250"/>
    <property type="project" value="UniProtKB"/>
</dbReference>
<dbReference type="GO" id="GO:0045202">
    <property type="term" value="C:synapse"/>
    <property type="evidence" value="ECO:0007669"/>
    <property type="project" value="UniProtKB-SubCell"/>
</dbReference>
<dbReference type="GO" id="GO:0030658">
    <property type="term" value="C:transport vesicle membrane"/>
    <property type="evidence" value="ECO:0007669"/>
    <property type="project" value="UniProtKB-SubCell"/>
</dbReference>
<dbReference type="GO" id="GO:0005484">
    <property type="term" value="F:SNAP receptor activity"/>
    <property type="evidence" value="ECO:0000318"/>
    <property type="project" value="GO_Central"/>
</dbReference>
<dbReference type="GO" id="GO:0000149">
    <property type="term" value="F:SNARE binding"/>
    <property type="evidence" value="ECO:0000318"/>
    <property type="project" value="GO_Central"/>
</dbReference>
<dbReference type="GO" id="GO:0017156">
    <property type="term" value="P:calcium-ion regulated exocytosis"/>
    <property type="evidence" value="ECO:0000250"/>
    <property type="project" value="UniProtKB"/>
</dbReference>
<dbReference type="GO" id="GO:0006888">
    <property type="term" value="P:endoplasmic reticulum to Golgi vesicle-mediated transport"/>
    <property type="evidence" value="ECO:0000250"/>
    <property type="project" value="UniProtKB"/>
</dbReference>
<dbReference type="GO" id="GO:0008333">
    <property type="term" value="P:endosome to lysosome transport"/>
    <property type="evidence" value="ECO:0000250"/>
    <property type="project" value="UniProtKB"/>
</dbReference>
<dbReference type="GO" id="GO:0043308">
    <property type="term" value="P:eosinophil degranulation"/>
    <property type="evidence" value="ECO:0000250"/>
    <property type="project" value="UniProtKB"/>
</dbReference>
<dbReference type="GO" id="GO:0006887">
    <property type="term" value="P:exocytosis"/>
    <property type="evidence" value="ECO:0000318"/>
    <property type="project" value="GO_Central"/>
</dbReference>
<dbReference type="GO" id="GO:0043312">
    <property type="term" value="P:neutrophil degranulation"/>
    <property type="evidence" value="ECO:0000250"/>
    <property type="project" value="UniProtKB"/>
</dbReference>
<dbReference type="GO" id="GO:0006911">
    <property type="term" value="P:phagocytosis, engulfment"/>
    <property type="evidence" value="ECO:0000250"/>
    <property type="project" value="UniProtKB"/>
</dbReference>
<dbReference type="GO" id="GO:0015031">
    <property type="term" value="P:protein transport"/>
    <property type="evidence" value="ECO:0007669"/>
    <property type="project" value="UniProtKB-KW"/>
</dbReference>
<dbReference type="GO" id="GO:0006906">
    <property type="term" value="P:vesicle fusion"/>
    <property type="evidence" value="ECO:0000250"/>
    <property type="project" value="UniProtKB"/>
</dbReference>
<dbReference type="GO" id="GO:0016192">
    <property type="term" value="P:vesicle-mediated transport"/>
    <property type="evidence" value="ECO:0000250"/>
    <property type="project" value="UniProtKB"/>
</dbReference>
<dbReference type="CDD" id="cd14824">
    <property type="entry name" value="Longin"/>
    <property type="match status" value="1"/>
</dbReference>
<dbReference type="CDD" id="cd15871">
    <property type="entry name" value="R-SNARE_VAMP7"/>
    <property type="match status" value="1"/>
</dbReference>
<dbReference type="FunFam" id="1.20.5.110:FF:000004">
    <property type="entry name" value="Vesicle-associated membrane protein 7"/>
    <property type="match status" value="1"/>
</dbReference>
<dbReference type="FunFam" id="3.30.450.50:FF:000006">
    <property type="entry name" value="Vesicle-associated membrane protein 7"/>
    <property type="match status" value="1"/>
</dbReference>
<dbReference type="Gene3D" id="1.20.5.110">
    <property type="match status" value="1"/>
</dbReference>
<dbReference type="Gene3D" id="3.30.450.50">
    <property type="entry name" value="Longin domain"/>
    <property type="match status" value="1"/>
</dbReference>
<dbReference type="InterPro" id="IPR011012">
    <property type="entry name" value="Longin-like_dom_sf"/>
</dbReference>
<dbReference type="InterPro" id="IPR010908">
    <property type="entry name" value="Longin_dom"/>
</dbReference>
<dbReference type="InterPro" id="IPR001388">
    <property type="entry name" value="Synaptobrevin-like"/>
</dbReference>
<dbReference type="InterPro" id="IPR051097">
    <property type="entry name" value="Synaptobrevin-like_transport"/>
</dbReference>
<dbReference type="InterPro" id="IPR042855">
    <property type="entry name" value="V_SNARE_CC"/>
</dbReference>
<dbReference type="PANTHER" id="PTHR21136">
    <property type="entry name" value="SNARE PROTEINS"/>
    <property type="match status" value="1"/>
</dbReference>
<dbReference type="PANTHER" id="PTHR21136:SF179">
    <property type="entry name" value="VESICLE ASSOCIATED MEMBRANE PROTEIN 7-RELATED"/>
    <property type="match status" value="1"/>
</dbReference>
<dbReference type="Pfam" id="PF13774">
    <property type="entry name" value="Longin"/>
    <property type="match status" value="1"/>
</dbReference>
<dbReference type="Pfam" id="PF00957">
    <property type="entry name" value="Synaptobrevin"/>
    <property type="match status" value="1"/>
</dbReference>
<dbReference type="PRINTS" id="PR00219">
    <property type="entry name" value="SYNAPTOBREVN"/>
</dbReference>
<dbReference type="SMART" id="SM01270">
    <property type="entry name" value="Longin"/>
    <property type="match status" value="1"/>
</dbReference>
<dbReference type="SUPFAM" id="SSF58038">
    <property type="entry name" value="SNARE fusion complex"/>
    <property type="match status" value="1"/>
</dbReference>
<dbReference type="SUPFAM" id="SSF64356">
    <property type="entry name" value="SNARE-like"/>
    <property type="match status" value="1"/>
</dbReference>
<dbReference type="PROSITE" id="PS50859">
    <property type="entry name" value="LONGIN"/>
    <property type="match status" value="1"/>
</dbReference>
<dbReference type="PROSITE" id="PS00417">
    <property type="entry name" value="SYNAPTOBREVIN"/>
    <property type="match status" value="1"/>
</dbReference>
<dbReference type="PROSITE" id="PS50892">
    <property type="entry name" value="V_SNARE"/>
    <property type="match status" value="1"/>
</dbReference>
<gene>
    <name evidence="2" type="primary">VAMP7</name>
    <name evidence="2" type="synonym">SYBL1</name>
    <name type="ORF">RCJMB04_7f19</name>
</gene>
<reference evidence="9" key="1">
    <citation type="journal article" date="2005" name="Genome Biol.">
        <title>Full-length cDNAs from chicken bursal lymphocytes to facilitate gene function analysis.</title>
        <authorList>
            <person name="Caldwell R.B."/>
            <person name="Kierzek A.M."/>
            <person name="Arakawa H."/>
            <person name="Bezzubov Y."/>
            <person name="Zaim J."/>
            <person name="Fiedler P."/>
            <person name="Kutter S."/>
            <person name="Blagodatski A."/>
            <person name="Kostovska D."/>
            <person name="Koter M."/>
            <person name="Plachy J."/>
            <person name="Carninci P."/>
            <person name="Hayashizaki Y."/>
            <person name="Buerstedde J.-M."/>
        </authorList>
    </citation>
    <scope>NUCLEOTIDE SEQUENCE [LARGE SCALE MRNA]</scope>
    <source>
        <strain evidence="9">CB</strain>
        <tissue evidence="8 9">Bursa of Fabricius</tissue>
    </source>
</reference>
<comment type="function">
    <text evidence="1">Involved in the targeting and/or fusion of transport vesicles to their target membrane during transport of proteins from the early endosome to the lysosome. Required for heterotypic fusion of late endosomes with lysosomes and homotypic lysosomal fusion. Required for calcium regulated lysosomal exocytosis. Involved in the export of chylomicrons from the endoplasmic reticulum to the cis Golgi. Required for focal exocytosis of late endocytic vesicles during phagosome formation (By similarity).</text>
</comment>
<comment type="subcellular location">
    <subcellularLocation>
        <location evidence="2 3 4 5">Cytoplasmic vesicle</location>
        <location evidence="2 3 4 5">Secretory vesicle membrane</location>
        <topology evidence="2 3 4 5">Single-pass type IV membrane protein</topology>
    </subcellularLocation>
    <subcellularLocation>
        <location evidence="2 3 4 5">Golgi apparatus</location>
        <location evidence="2 3 4 5">trans-Golgi network membrane</location>
        <topology evidence="2 3 4 5">Single-pass type IV membrane protein</topology>
    </subcellularLocation>
    <subcellularLocation>
        <location evidence="2 3 4 5">Late endosome membrane</location>
        <topology evidence="2 3 4 5">Single-pass type IV membrane protein</topology>
    </subcellularLocation>
    <subcellularLocation>
        <location evidence="2 3 4 5">Lysosome membrane</location>
        <topology evidence="2 3 4 5">Single-pass type IV membrane protein</topology>
    </subcellularLocation>
    <subcellularLocation>
        <location evidence="2 3 4 5">Endoplasmic reticulum membrane</location>
        <topology evidence="2 3 4 5">Single-pass type IV membrane protein</topology>
    </subcellularLocation>
    <subcellularLocation>
        <location evidence="2 3 4 5">Cytoplasmic vesicle</location>
        <location evidence="2 3 4 5">Phagosome membrane</location>
        <topology evidence="2 3 4 5">Single-pass type IV membrane protein</topology>
    </subcellularLocation>
    <subcellularLocation>
        <location evidence="1">Synapse</location>
        <location evidence="1">Synaptosome</location>
    </subcellularLocation>
</comment>
<comment type="similarity">
    <text evidence="5">Belongs to the synaptobrevin family.</text>
</comment>
<accession>Q5ZL74</accession>
<name>VAMP7_CHICK</name>